<proteinExistence type="inferred from homology"/>
<name>RL17_ARTS2</name>
<gene>
    <name evidence="1" type="primary">rplQ</name>
    <name type="ordered locus">Arth_2939</name>
</gene>
<sequence>MPTPTKGPRLGGGPAHERLMLANLAAALFEHKRITTTVTKAKRLKPYAERLVTFAKRGDLASRRRVLGLISNKGVVHELFTDIAQAVENRDGGYTRITKIGNRKGDNAPMAVIELVLEPVSAKQAVVAEATSAAKRDADKKEAAAAPAAETEVAETEAAPEAEAAEAPKAEAAETEEAPAAEEAAEKPAAEEKDAK</sequence>
<accession>A0JZ48</accession>
<reference key="1">
    <citation type="journal article" date="2013" name="Stand. Genomic Sci.">
        <title>Complete genome sequence of Arthrobacter sp. strain FB24.</title>
        <authorList>
            <person name="Nakatsu C.H."/>
            <person name="Barabote R."/>
            <person name="Thompson S."/>
            <person name="Bruce D."/>
            <person name="Detter C."/>
            <person name="Brettin T."/>
            <person name="Han C."/>
            <person name="Beasley F."/>
            <person name="Chen W."/>
            <person name="Konopka A."/>
            <person name="Xie G."/>
        </authorList>
    </citation>
    <scope>NUCLEOTIDE SEQUENCE [LARGE SCALE GENOMIC DNA]</scope>
    <source>
        <strain>FB24</strain>
    </source>
</reference>
<feature type="chain" id="PRO_1000055766" description="Large ribosomal subunit protein bL17">
    <location>
        <begin position="1"/>
        <end position="196"/>
    </location>
</feature>
<feature type="region of interest" description="Disordered" evidence="2">
    <location>
        <begin position="133"/>
        <end position="196"/>
    </location>
</feature>
<feature type="compositionally biased region" description="Basic and acidic residues" evidence="2">
    <location>
        <begin position="134"/>
        <end position="143"/>
    </location>
</feature>
<feature type="compositionally biased region" description="Acidic residues" evidence="2">
    <location>
        <begin position="152"/>
        <end position="164"/>
    </location>
</feature>
<feature type="compositionally biased region" description="Basic and acidic residues" evidence="2">
    <location>
        <begin position="184"/>
        <end position="196"/>
    </location>
</feature>
<keyword id="KW-1185">Reference proteome</keyword>
<keyword id="KW-0687">Ribonucleoprotein</keyword>
<keyword id="KW-0689">Ribosomal protein</keyword>
<evidence type="ECO:0000255" key="1">
    <source>
        <dbReference type="HAMAP-Rule" id="MF_01368"/>
    </source>
</evidence>
<evidence type="ECO:0000256" key="2">
    <source>
        <dbReference type="SAM" id="MobiDB-lite"/>
    </source>
</evidence>
<evidence type="ECO:0000305" key="3"/>
<comment type="subunit">
    <text evidence="1">Part of the 50S ribosomal subunit. Contacts protein L32.</text>
</comment>
<comment type="similarity">
    <text evidence="1">Belongs to the bacterial ribosomal protein bL17 family.</text>
</comment>
<dbReference type="EMBL" id="CP000454">
    <property type="protein sequence ID" value="ABK04318.1"/>
    <property type="molecule type" value="Genomic_DNA"/>
</dbReference>
<dbReference type="RefSeq" id="WP_011692777.1">
    <property type="nucleotide sequence ID" value="NC_008541.1"/>
</dbReference>
<dbReference type="SMR" id="A0JZ48"/>
<dbReference type="STRING" id="290399.Arth_2939"/>
<dbReference type="KEGG" id="art:Arth_2939"/>
<dbReference type="eggNOG" id="COG0203">
    <property type="taxonomic scope" value="Bacteria"/>
</dbReference>
<dbReference type="HOGENOM" id="CLU_074407_0_0_11"/>
<dbReference type="OrthoDB" id="9809073at2"/>
<dbReference type="Proteomes" id="UP000000754">
    <property type="component" value="Chromosome"/>
</dbReference>
<dbReference type="GO" id="GO:0022625">
    <property type="term" value="C:cytosolic large ribosomal subunit"/>
    <property type="evidence" value="ECO:0007669"/>
    <property type="project" value="TreeGrafter"/>
</dbReference>
<dbReference type="GO" id="GO:0003735">
    <property type="term" value="F:structural constituent of ribosome"/>
    <property type="evidence" value="ECO:0007669"/>
    <property type="project" value="InterPro"/>
</dbReference>
<dbReference type="GO" id="GO:0006412">
    <property type="term" value="P:translation"/>
    <property type="evidence" value="ECO:0007669"/>
    <property type="project" value="UniProtKB-UniRule"/>
</dbReference>
<dbReference type="Gene3D" id="3.90.1030.10">
    <property type="entry name" value="Ribosomal protein L17"/>
    <property type="match status" value="1"/>
</dbReference>
<dbReference type="HAMAP" id="MF_01368">
    <property type="entry name" value="Ribosomal_bL17"/>
    <property type="match status" value="1"/>
</dbReference>
<dbReference type="InterPro" id="IPR000456">
    <property type="entry name" value="Ribosomal_bL17"/>
</dbReference>
<dbReference type="InterPro" id="IPR047859">
    <property type="entry name" value="Ribosomal_bL17_CS"/>
</dbReference>
<dbReference type="InterPro" id="IPR036373">
    <property type="entry name" value="Ribosomal_bL17_sf"/>
</dbReference>
<dbReference type="NCBIfam" id="TIGR00059">
    <property type="entry name" value="L17"/>
    <property type="match status" value="1"/>
</dbReference>
<dbReference type="PANTHER" id="PTHR14413:SF16">
    <property type="entry name" value="LARGE RIBOSOMAL SUBUNIT PROTEIN BL17M"/>
    <property type="match status" value="1"/>
</dbReference>
<dbReference type="PANTHER" id="PTHR14413">
    <property type="entry name" value="RIBOSOMAL PROTEIN L17"/>
    <property type="match status" value="1"/>
</dbReference>
<dbReference type="Pfam" id="PF01196">
    <property type="entry name" value="Ribosomal_L17"/>
    <property type="match status" value="1"/>
</dbReference>
<dbReference type="SUPFAM" id="SSF64263">
    <property type="entry name" value="Prokaryotic ribosomal protein L17"/>
    <property type="match status" value="1"/>
</dbReference>
<dbReference type="PROSITE" id="PS01167">
    <property type="entry name" value="RIBOSOMAL_L17"/>
    <property type="match status" value="1"/>
</dbReference>
<protein>
    <recommendedName>
        <fullName evidence="1">Large ribosomal subunit protein bL17</fullName>
    </recommendedName>
    <alternativeName>
        <fullName evidence="3">50S ribosomal protein L17</fullName>
    </alternativeName>
</protein>
<organism>
    <name type="scientific">Arthrobacter sp. (strain FB24)</name>
    <dbReference type="NCBI Taxonomy" id="290399"/>
    <lineage>
        <taxon>Bacteria</taxon>
        <taxon>Bacillati</taxon>
        <taxon>Actinomycetota</taxon>
        <taxon>Actinomycetes</taxon>
        <taxon>Micrococcales</taxon>
        <taxon>Micrococcaceae</taxon>
        <taxon>Arthrobacter</taxon>
    </lineage>
</organism>